<gene>
    <name type="ORF">C32D5.10</name>
</gene>
<sequence>MDSPSTSESPLKKNTIQDFGESNMTESPQSKEEIDEPEEECSVCKNEIIDTTSLSDCCHEFCYDCIVGWLTKGSGPFCPMCKTPVSFIQRKGTDEKITVQQIKSEGEPAATASEDLVTEKRIVSRKIRSCRRLMNQIDEIIGATSSRSDSQKRKPRLEELNSMKQLCVSQLNSLQMLRDDIDHGAAKALIVSKAAFRRLIYERQVISEGLPDATNSLSKTEFRDNIDHYRAVLHSFLSVELKSLPAKTQPRVDNENSWYFYTLHDVAEGKDEEIINRIFSMIEDRGTRDLNAREVDAALNGLVSCRVVIAFIAELKSLINSRKSFLEWCGAITYRIRTDRGGESAGNDVVTVDDSIELEPEENRSNHRSRRFPVFTPFDRVFGSTMGHMYRGQPQAPLRLGPNATNPFRPAPLPVPSQLPIAGIPWAELTTSSAGAGSARSRGSDSVVEIDDDDDNDGVDVDDDDREDSDEPRTYSNSEEDSDEEIQVVERDDTIILDDSNRSLPKPVANGSADRKRKYEFPLEDHWKKAKTSQLPEGLVDDVQELIAKYNMPLTQSMNMLVGAAQEAIIRINKPMPSTSSAPDISKFKPDDMLQLASYLSRTGALSRRQ</sequence>
<proteinExistence type="predicted"/>
<organism>
    <name type="scientific">Caenorhabditis elegans</name>
    <dbReference type="NCBI Taxonomy" id="6239"/>
    <lineage>
        <taxon>Eukaryota</taxon>
        <taxon>Metazoa</taxon>
        <taxon>Ecdysozoa</taxon>
        <taxon>Nematoda</taxon>
        <taxon>Chromadorea</taxon>
        <taxon>Rhabditida</taxon>
        <taxon>Rhabditina</taxon>
        <taxon>Rhabditomorpha</taxon>
        <taxon>Rhabditoidea</taxon>
        <taxon>Rhabditidae</taxon>
        <taxon>Peloderinae</taxon>
        <taxon>Caenorhabditis</taxon>
    </lineage>
</organism>
<accession>Q09268</accession>
<name>YQDA_CAEEL</name>
<keyword id="KW-0479">Metal-binding</keyword>
<keyword id="KW-1185">Reference proteome</keyword>
<keyword id="KW-0862">Zinc</keyword>
<keyword id="KW-0863">Zinc-finger</keyword>
<reference key="1">
    <citation type="journal article" date="1998" name="Science">
        <title>Genome sequence of the nematode C. elegans: a platform for investigating biology.</title>
        <authorList>
            <consortium name="The C. elegans sequencing consortium"/>
        </authorList>
    </citation>
    <scope>NUCLEOTIDE SEQUENCE [LARGE SCALE GENOMIC DNA]</scope>
    <source>
        <strain>Bristol N2</strain>
    </source>
</reference>
<evidence type="ECO:0000255" key="1">
    <source>
        <dbReference type="PROSITE-ProRule" id="PRU00175"/>
    </source>
</evidence>
<evidence type="ECO:0000256" key="2">
    <source>
        <dbReference type="SAM" id="MobiDB-lite"/>
    </source>
</evidence>
<dbReference type="EMBL" id="FO080708">
    <property type="protein sequence ID" value="CCD66038.1"/>
    <property type="molecule type" value="Genomic_DNA"/>
</dbReference>
<dbReference type="PIR" id="T15741">
    <property type="entry name" value="T15741"/>
</dbReference>
<dbReference type="RefSeq" id="NP_495278.2">
    <property type="nucleotide sequence ID" value="NM_062877.7"/>
</dbReference>
<dbReference type="SMR" id="Q09268"/>
<dbReference type="BioGRID" id="39391">
    <property type="interactions" value="3"/>
</dbReference>
<dbReference type="FunCoup" id="Q09268">
    <property type="interactions" value="416"/>
</dbReference>
<dbReference type="IntAct" id="Q09268">
    <property type="interactions" value="1"/>
</dbReference>
<dbReference type="STRING" id="6239.C32D5.10.1"/>
<dbReference type="PaxDb" id="6239-C32D5.10"/>
<dbReference type="PeptideAtlas" id="Q09268"/>
<dbReference type="EnsemblMetazoa" id="C32D5.10.1">
    <property type="protein sequence ID" value="C32D5.10.1"/>
    <property type="gene ID" value="WBGene00016317"/>
</dbReference>
<dbReference type="GeneID" id="174051"/>
<dbReference type="KEGG" id="cel:CELE_C32D5.10"/>
<dbReference type="UCSC" id="C32D5.10">
    <property type="organism name" value="c. elegans"/>
</dbReference>
<dbReference type="AGR" id="WB:WBGene00016317"/>
<dbReference type="CTD" id="174051"/>
<dbReference type="WormBase" id="C32D5.10">
    <property type="protein sequence ID" value="CE29688"/>
    <property type="gene ID" value="WBGene00016317"/>
</dbReference>
<dbReference type="eggNOG" id="KOG0800">
    <property type="taxonomic scope" value="Eukaryota"/>
</dbReference>
<dbReference type="HOGENOM" id="CLU_024532_0_0_1"/>
<dbReference type="InParanoid" id="Q09268"/>
<dbReference type="OMA" id="CYDCIIG"/>
<dbReference type="OrthoDB" id="21204at2759"/>
<dbReference type="PRO" id="PR:Q09268"/>
<dbReference type="Proteomes" id="UP000001940">
    <property type="component" value="Chromosome II"/>
</dbReference>
<dbReference type="Bgee" id="WBGene00016317">
    <property type="expression patterns" value="Expressed in germ line (C elegans) and 4 other cell types or tissues"/>
</dbReference>
<dbReference type="GO" id="GO:0008270">
    <property type="term" value="F:zinc ion binding"/>
    <property type="evidence" value="ECO:0007669"/>
    <property type="project" value="UniProtKB-KW"/>
</dbReference>
<dbReference type="Gene3D" id="3.30.40.10">
    <property type="entry name" value="Zinc/RING finger domain, C3HC4 (zinc finger)"/>
    <property type="match status" value="1"/>
</dbReference>
<dbReference type="InterPro" id="IPR047126">
    <property type="entry name" value="RNF141-like"/>
</dbReference>
<dbReference type="InterPro" id="IPR018957">
    <property type="entry name" value="Znf_C3HC4_RING-type"/>
</dbReference>
<dbReference type="InterPro" id="IPR001841">
    <property type="entry name" value="Znf_RING"/>
</dbReference>
<dbReference type="InterPro" id="IPR013083">
    <property type="entry name" value="Znf_RING/FYVE/PHD"/>
</dbReference>
<dbReference type="InterPro" id="IPR017907">
    <property type="entry name" value="Znf_RING_CS"/>
</dbReference>
<dbReference type="PANTHER" id="PTHR12109:SF11">
    <property type="entry name" value="PROTEIN CBG02634"/>
    <property type="match status" value="1"/>
</dbReference>
<dbReference type="PANTHER" id="PTHR12109">
    <property type="entry name" value="RING FINGER PROTEIN 141-RELATED"/>
    <property type="match status" value="1"/>
</dbReference>
<dbReference type="Pfam" id="PF00097">
    <property type="entry name" value="zf-C3HC4"/>
    <property type="match status" value="1"/>
</dbReference>
<dbReference type="SMART" id="SM00184">
    <property type="entry name" value="RING"/>
    <property type="match status" value="1"/>
</dbReference>
<dbReference type="SUPFAM" id="SSF57850">
    <property type="entry name" value="RING/U-box"/>
    <property type="match status" value="1"/>
</dbReference>
<dbReference type="PROSITE" id="PS00518">
    <property type="entry name" value="ZF_RING_1"/>
    <property type="match status" value="1"/>
</dbReference>
<dbReference type="PROSITE" id="PS50089">
    <property type="entry name" value="ZF_RING_2"/>
    <property type="match status" value="1"/>
</dbReference>
<protein>
    <recommendedName>
        <fullName>Uncharacterized RING finger protein C32D5.10</fullName>
    </recommendedName>
</protein>
<feature type="chain" id="PRO_0000056323" description="Uncharacterized RING finger protein C32D5.10">
    <location>
        <begin position="1"/>
        <end position="610"/>
    </location>
</feature>
<feature type="zinc finger region" description="RING-type" evidence="1">
    <location>
        <begin position="41"/>
        <end position="82"/>
    </location>
</feature>
<feature type="region of interest" description="Disordered" evidence="2">
    <location>
        <begin position="1"/>
        <end position="36"/>
    </location>
</feature>
<feature type="region of interest" description="Disordered" evidence="2">
    <location>
        <begin position="390"/>
        <end position="411"/>
    </location>
</feature>
<feature type="region of interest" description="Disordered" evidence="2">
    <location>
        <begin position="431"/>
        <end position="515"/>
    </location>
</feature>
<feature type="compositionally biased region" description="Polar residues" evidence="2">
    <location>
        <begin position="1"/>
        <end position="28"/>
    </location>
</feature>
<feature type="compositionally biased region" description="Low complexity" evidence="2">
    <location>
        <begin position="432"/>
        <end position="447"/>
    </location>
</feature>
<feature type="compositionally biased region" description="Acidic residues" evidence="2">
    <location>
        <begin position="448"/>
        <end position="470"/>
    </location>
</feature>
<feature type="compositionally biased region" description="Acidic residues" evidence="2">
    <location>
        <begin position="478"/>
        <end position="487"/>
    </location>
</feature>